<accession>B6J6B1</accession>
<keyword id="KW-0963">Cytoplasm</keyword>
<keyword id="KW-0342">GTP-binding</keyword>
<keyword id="KW-0396">Initiation factor</keyword>
<keyword id="KW-0547">Nucleotide-binding</keyword>
<keyword id="KW-0648">Protein biosynthesis</keyword>
<sequence>MADMSVKQLADLVRTTPERLLEQLKEAGVAITHVDQTISDEEKRKLLLHLKTSHSTETGKKRSKIVLKRKKLSVVKSGKKSVNVEIRSKRTYTKPVVEQKRETEPAPTQEVPLTSDTTNLNEKAEVNVATLEKAVEAEVKEEAKKTPSEKKETPKKGPRKETRRSRKPDKEDKWEREELHMTKLVEERRRRHKPAHMPDSDNASAKLEQGFARPTAPVVREVALPESITVADLAQKMSVKAAEVIKAMMKLGAMVTINQRIDQETAAIVVEEMGHKPKLIKEDVLEENLVATLGEQTGEAVPRAPVVTIMGHVDHGKTSLLDYIRRTKVTSTEAGGITQHIGAYHVETELGMITFLDTPGHEAFTAMRARGAKCTDIVVLVVAADDGVMPQTVEAIQHARAAKVPVVVAVNKIDKPEADPERIKTELSTHDVLPEEWGGDTMFQPISAKTGEGIDALLERILLQAEVLELKAVDNGPARGMVVESRLDRGRGPVATVLVTSGELHLGDILLVGREYGRVRAMIGDDGRPCESAGPSMPVEVLGLSGTPVAGEEAIVVPDERKAREIARFRQGKYREVRLAKKQTAHLERIFDRMGEGKQNTLNIVLKADVQGSLEALTEALNKLSTDEVKVNIIASGVGGITESDVNLAIASDAVVIGFNVRADAPTRVLVEREGVDLRYYSIIYDLIDEVKKALSGLLAPEFEEKIVGLAEVRDVFRSSKIGAIAGCMVVEGVVRRHLPIRVLRDNVVIYEGQLESLRRYKEDVAEVRQGTECGIGVKNYNDVKVGDQIEVYEKTQVHRTIA</sequence>
<reference key="1">
    <citation type="journal article" date="2009" name="Infect. Immun.">
        <title>Comparative genomics reveal extensive transposon-mediated genomic plasticity and diversity among potential effector proteins within the genus Coxiella.</title>
        <authorList>
            <person name="Beare P.A."/>
            <person name="Unsworth N."/>
            <person name="Andoh M."/>
            <person name="Voth D.E."/>
            <person name="Omsland A."/>
            <person name="Gilk S.D."/>
            <person name="Williams K.P."/>
            <person name="Sobral B.W."/>
            <person name="Kupko J.J. III"/>
            <person name="Porcella S.F."/>
            <person name="Samuel J.E."/>
            <person name="Heinzen R.A."/>
        </authorList>
    </citation>
    <scope>NUCLEOTIDE SEQUENCE [LARGE SCALE GENOMIC DNA]</scope>
    <source>
        <strain>CbuK_Q154</strain>
    </source>
</reference>
<gene>
    <name evidence="2" type="primary">infB</name>
    <name type="ordered locus">CbuK_0603</name>
</gene>
<feature type="chain" id="PRO_1000093778" description="Translation initiation factor IF-2">
    <location>
        <begin position="1"/>
        <end position="803"/>
    </location>
</feature>
<feature type="domain" description="tr-type G">
    <location>
        <begin position="302"/>
        <end position="471"/>
    </location>
</feature>
<feature type="region of interest" description="Disordered" evidence="3">
    <location>
        <begin position="95"/>
        <end position="125"/>
    </location>
</feature>
<feature type="region of interest" description="Disordered" evidence="3">
    <location>
        <begin position="138"/>
        <end position="178"/>
    </location>
</feature>
<feature type="region of interest" description="G1" evidence="1">
    <location>
        <begin position="311"/>
        <end position="318"/>
    </location>
</feature>
<feature type="region of interest" description="G2" evidence="1">
    <location>
        <begin position="336"/>
        <end position="340"/>
    </location>
</feature>
<feature type="region of interest" description="G3" evidence="1">
    <location>
        <begin position="357"/>
        <end position="360"/>
    </location>
</feature>
<feature type="region of interest" description="G4" evidence="1">
    <location>
        <begin position="411"/>
        <end position="414"/>
    </location>
</feature>
<feature type="region of interest" description="G5" evidence="1">
    <location>
        <begin position="447"/>
        <end position="449"/>
    </location>
</feature>
<feature type="compositionally biased region" description="Polar residues" evidence="3">
    <location>
        <begin position="111"/>
        <end position="121"/>
    </location>
</feature>
<feature type="compositionally biased region" description="Basic and acidic residues" evidence="3">
    <location>
        <begin position="138"/>
        <end position="155"/>
    </location>
</feature>
<feature type="compositionally biased region" description="Basic residues" evidence="3">
    <location>
        <begin position="156"/>
        <end position="167"/>
    </location>
</feature>
<feature type="compositionally biased region" description="Basic and acidic residues" evidence="3">
    <location>
        <begin position="168"/>
        <end position="178"/>
    </location>
</feature>
<feature type="binding site" evidence="2">
    <location>
        <begin position="311"/>
        <end position="318"/>
    </location>
    <ligand>
        <name>GTP</name>
        <dbReference type="ChEBI" id="CHEBI:37565"/>
    </ligand>
</feature>
<feature type="binding site" evidence="2">
    <location>
        <begin position="357"/>
        <end position="361"/>
    </location>
    <ligand>
        <name>GTP</name>
        <dbReference type="ChEBI" id="CHEBI:37565"/>
    </ligand>
</feature>
<feature type="binding site" evidence="2">
    <location>
        <begin position="411"/>
        <end position="414"/>
    </location>
    <ligand>
        <name>GTP</name>
        <dbReference type="ChEBI" id="CHEBI:37565"/>
    </ligand>
</feature>
<protein>
    <recommendedName>
        <fullName evidence="2">Translation initiation factor IF-2</fullName>
    </recommendedName>
</protein>
<evidence type="ECO:0000250" key="1"/>
<evidence type="ECO:0000255" key="2">
    <source>
        <dbReference type="HAMAP-Rule" id="MF_00100"/>
    </source>
</evidence>
<evidence type="ECO:0000256" key="3">
    <source>
        <dbReference type="SAM" id="MobiDB-lite"/>
    </source>
</evidence>
<dbReference type="EMBL" id="CP001020">
    <property type="protein sequence ID" value="ACJ19871.1"/>
    <property type="molecule type" value="Genomic_DNA"/>
</dbReference>
<dbReference type="RefSeq" id="WP_005769041.1">
    <property type="nucleotide sequence ID" value="NC_011528.1"/>
</dbReference>
<dbReference type="SMR" id="B6J6B1"/>
<dbReference type="KEGG" id="cbc:CbuK_0603"/>
<dbReference type="HOGENOM" id="CLU_006301_6_0_6"/>
<dbReference type="GO" id="GO:0005829">
    <property type="term" value="C:cytosol"/>
    <property type="evidence" value="ECO:0007669"/>
    <property type="project" value="TreeGrafter"/>
</dbReference>
<dbReference type="GO" id="GO:0005525">
    <property type="term" value="F:GTP binding"/>
    <property type="evidence" value="ECO:0007669"/>
    <property type="project" value="UniProtKB-KW"/>
</dbReference>
<dbReference type="GO" id="GO:0003924">
    <property type="term" value="F:GTPase activity"/>
    <property type="evidence" value="ECO:0007669"/>
    <property type="project" value="UniProtKB-UniRule"/>
</dbReference>
<dbReference type="GO" id="GO:0003743">
    <property type="term" value="F:translation initiation factor activity"/>
    <property type="evidence" value="ECO:0007669"/>
    <property type="project" value="UniProtKB-UniRule"/>
</dbReference>
<dbReference type="CDD" id="cd01887">
    <property type="entry name" value="IF2_eIF5B"/>
    <property type="match status" value="1"/>
</dbReference>
<dbReference type="CDD" id="cd03702">
    <property type="entry name" value="IF2_mtIF2_II"/>
    <property type="match status" value="1"/>
</dbReference>
<dbReference type="CDD" id="cd03692">
    <property type="entry name" value="mtIF2_IVc"/>
    <property type="match status" value="1"/>
</dbReference>
<dbReference type="FunFam" id="2.40.30.10:FF:000007">
    <property type="entry name" value="Translation initiation factor IF-2"/>
    <property type="match status" value="1"/>
</dbReference>
<dbReference type="FunFam" id="2.40.30.10:FF:000008">
    <property type="entry name" value="Translation initiation factor IF-2"/>
    <property type="match status" value="1"/>
</dbReference>
<dbReference type="FunFam" id="3.40.50.10050:FF:000001">
    <property type="entry name" value="Translation initiation factor IF-2"/>
    <property type="match status" value="1"/>
</dbReference>
<dbReference type="FunFam" id="3.40.50.300:FF:000019">
    <property type="entry name" value="Translation initiation factor IF-2"/>
    <property type="match status" value="1"/>
</dbReference>
<dbReference type="Gene3D" id="3.40.50.300">
    <property type="entry name" value="P-loop containing nucleotide triphosphate hydrolases"/>
    <property type="match status" value="1"/>
</dbReference>
<dbReference type="Gene3D" id="3.30.56.50">
    <property type="entry name" value="Putative DNA-binding domain, N-terminal subdomain of bacterial translation initiation factor IF2"/>
    <property type="match status" value="1"/>
</dbReference>
<dbReference type="Gene3D" id="2.40.30.10">
    <property type="entry name" value="Translation factors"/>
    <property type="match status" value="2"/>
</dbReference>
<dbReference type="Gene3D" id="3.40.50.10050">
    <property type="entry name" value="Translation initiation factor IF- 2, domain 3"/>
    <property type="match status" value="1"/>
</dbReference>
<dbReference type="HAMAP" id="MF_00100_B">
    <property type="entry name" value="IF_2_B"/>
    <property type="match status" value="1"/>
</dbReference>
<dbReference type="InterPro" id="IPR009061">
    <property type="entry name" value="DNA-bd_dom_put_sf"/>
</dbReference>
<dbReference type="InterPro" id="IPR053905">
    <property type="entry name" value="EF-G-like_DII"/>
</dbReference>
<dbReference type="InterPro" id="IPR044145">
    <property type="entry name" value="IF2_II"/>
</dbReference>
<dbReference type="InterPro" id="IPR006847">
    <property type="entry name" value="IF2_N"/>
</dbReference>
<dbReference type="InterPro" id="IPR027417">
    <property type="entry name" value="P-loop_NTPase"/>
</dbReference>
<dbReference type="InterPro" id="IPR005225">
    <property type="entry name" value="Small_GTP-bd"/>
</dbReference>
<dbReference type="InterPro" id="IPR000795">
    <property type="entry name" value="T_Tr_GTP-bd_dom"/>
</dbReference>
<dbReference type="InterPro" id="IPR000178">
    <property type="entry name" value="TF_IF2_bacterial-like"/>
</dbReference>
<dbReference type="InterPro" id="IPR015760">
    <property type="entry name" value="TIF_IF2"/>
</dbReference>
<dbReference type="InterPro" id="IPR023115">
    <property type="entry name" value="TIF_IF2_dom3"/>
</dbReference>
<dbReference type="InterPro" id="IPR036925">
    <property type="entry name" value="TIF_IF2_dom3_sf"/>
</dbReference>
<dbReference type="InterPro" id="IPR009000">
    <property type="entry name" value="Transl_B-barrel_sf"/>
</dbReference>
<dbReference type="NCBIfam" id="TIGR00487">
    <property type="entry name" value="IF-2"/>
    <property type="match status" value="1"/>
</dbReference>
<dbReference type="NCBIfam" id="TIGR00231">
    <property type="entry name" value="small_GTP"/>
    <property type="match status" value="1"/>
</dbReference>
<dbReference type="PANTHER" id="PTHR43381:SF5">
    <property type="entry name" value="TR-TYPE G DOMAIN-CONTAINING PROTEIN"/>
    <property type="match status" value="1"/>
</dbReference>
<dbReference type="PANTHER" id="PTHR43381">
    <property type="entry name" value="TRANSLATION INITIATION FACTOR IF-2-RELATED"/>
    <property type="match status" value="1"/>
</dbReference>
<dbReference type="Pfam" id="PF22042">
    <property type="entry name" value="EF-G_D2"/>
    <property type="match status" value="1"/>
</dbReference>
<dbReference type="Pfam" id="PF00009">
    <property type="entry name" value="GTP_EFTU"/>
    <property type="match status" value="1"/>
</dbReference>
<dbReference type="Pfam" id="PF11987">
    <property type="entry name" value="IF-2"/>
    <property type="match status" value="1"/>
</dbReference>
<dbReference type="Pfam" id="PF04760">
    <property type="entry name" value="IF2_N"/>
    <property type="match status" value="2"/>
</dbReference>
<dbReference type="SUPFAM" id="SSF52156">
    <property type="entry name" value="Initiation factor IF2/eIF5b, domain 3"/>
    <property type="match status" value="1"/>
</dbReference>
<dbReference type="SUPFAM" id="SSF52540">
    <property type="entry name" value="P-loop containing nucleoside triphosphate hydrolases"/>
    <property type="match status" value="1"/>
</dbReference>
<dbReference type="SUPFAM" id="SSF46955">
    <property type="entry name" value="Putative DNA-binding domain"/>
    <property type="match status" value="1"/>
</dbReference>
<dbReference type="SUPFAM" id="SSF50447">
    <property type="entry name" value="Translation proteins"/>
    <property type="match status" value="2"/>
</dbReference>
<dbReference type="PROSITE" id="PS51722">
    <property type="entry name" value="G_TR_2"/>
    <property type="match status" value="1"/>
</dbReference>
<dbReference type="PROSITE" id="PS01176">
    <property type="entry name" value="IF2"/>
    <property type="match status" value="1"/>
</dbReference>
<comment type="function">
    <text evidence="2">One of the essential components for the initiation of protein synthesis. Protects formylmethionyl-tRNA from spontaneous hydrolysis and promotes its binding to the 30S ribosomal subunits. Also involved in the hydrolysis of GTP during the formation of the 70S ribosomal complex.</text>
</comment>
<comment type="subcellular location">
    <subcellularLocation>
        <location evidence="2">Cytoplasm</location>
    </subcellularLocation>
</comment>
<comment type="similarity">
    <text evidence="2">Belongs to the TRAFAC class translation factor GTPase superfamily. Classic translation factor GTPase family. IF-2 subfamily.</text>
</comment>
<name>IF2_COXB1</name>
<organism>
    <name type="scientific">Coxiella burnetii (strain CbuK_Q154)</name>
    <name type="common">Coxiella burnetii (strain Q154)</name>
    <dbReference type="NCBI Taxonomy" id="434924"/>
    <lineage>
        <taxon>Bacteria</taxon>
        <taxon>Pseudomonadati</taxon>
        <taxon>Pseudomonadota</taxon>
        <taxon>Gammaproteobacteria</taxon>
        <taxon>Legionellales</taxon>
        <taxon>Coxiellaceae</taxon>
        <taxon>Coxiella</taxon>
    </lineage>
</organism>
<proteinExistence type="inferred from homology"/>